<keyword id="KW-0903">Direct protein sequencing</keyword>
<keyword id="KW-1015">Disulfide bond</keyword>
<keyword id="KW-0872">Ion channel impairing toxin</keyword>
<keyword id="KW-0528">Neurotoxin</keyword>
<keyword id="KW-0964">Secreted</keyword>
<keyword id="KW-0800">Toxin</keyword>
<keyword id="KW-0738">Voltage-gated sodium channel impairing toxin</keyword>
<sequence length="65" mass="7101">VRDGYIVDDKNCVYHCIPPCDGLCKKNGGKSGSCSFLVPSGLACWCKALPDNVPIKDPSYKCHKR</sequence>
<name>SCX4_ANDCR</name>
<feature type="chain" id="PRO_5001113087" description="Sodium channel alpha-toxin Acra4">
    <location>
        <begin position="1"/>
        <end position="64"/>
    </location>
</feature>
<feature type="propeptide" id="PRO_0000432477" description="Removed by a carboxypeptidase" evidence="1">
    <location>
        <position position="65"/>
    </location>
</feature>
<feature type="domain" description="LCN-type CS-alpha/beta" evidence="2">
    <location>
        <begin position="2"/>
        <end position="63"/>
    </location>
</feature>
<feature type="disulfide bond" evidence="2">
    <location>
        <begin position="12"/>
        <end position="62"/>
    </location>
</feature>
<feature type="disulfide bond" evidence="2">
    <location>
        <begin position="16"/>
        <end position="34"/>
    </location>
</feature>
<feature type="disulfide bond" evidence="2">
    <location>
        <begin position="20"/>
        <end position="44"/>
    </location>
</feature>
<feature type="disulfide bond" evidence="2">
    <location>
        <begin position="24"/>
        <end position="46"/>
    </location>
</feature>
<reference key="1">
    <citation type="journal article" date="2013" name="Biochimie">
        <title>Molecular cloning and biochemical characterization of the first Na(+)-channel alpha-type toxin peptide (Acra4) from Androctonus crassicauda scorpion venom.</title>
        <authorList>
            <person name="Caliskan F."/>
            <person name="Quintero-Hernandez V."/>
            <person name="Restano-Cassulini R."/>
            <person name="Coronas-Valderrama F.I."/>
            <person name="Corzo G."/>
            <person name="Possani L.D."/>
        </authorList>
    </citation>
    <scope>NUCLEOTIDE SEQUENCE [MRNA] OF 7-65</scope>
    <scope>PROTEIN SEQUENCE OF 1-14</scope>
    <scope>SUBCELLULAR LOCATION</scope>
    <scope>MASS SPECTROMETRY</scope>
    <scope>TOXIC DOSE</scope>
    <source>
        <tissue>Venom</tissue>
        <tissue>Venom gland</tissue>
    </source>
</reference>
<dbReference type="EMBL" id="JQ975126">
    <property type="protein sequence ID" value="AGE83103.1"/>
    <property type="molecule type" value="mRNA"/>
</dbReference>
<dbReference type="SMR" id="M1JBC0"/>
<dbReference type="GO" id="GO:0005576">
    <property type="term" value="C:extracellular region"/>
    <property type="evidence" value="ECO:0007669"/>
    <property type="project" value="UniProtKB-SubCell"/>
</dbReference>
<dbReference type="GO" id="GO:0019871">
    <property type="term" value="F:sodium channel inhibitor activity"/>
    <property type="evidence" value="ECO:0007669"/>
    <property type="project" value="InterPro"/>
</dbReference>
<dbReference type="GO" id="GO:0090729">
    <property type="term" value="F:toxin activity"/>
    <property type="evidence" value="ECO:0007669"/>
    <property type="project" value="UniProtKB-KW"/>
</dbReference>
<dbReference type="GO" id="GO:0006952">
    <property type="term" value="P:defense response"/>
    <property type="evidence" value="ECO:0007669"/>
    <property type="project" value="InterPro"/>
</dbReference>
<dbReference type="CDD" id="cd23106">
    <property type="entry name" value="neurotoxins_LC_scorpion"/>
    <property type="match status" value="1"/>
</dbReference>
<dbReference type="Gene3D" id="3.30.30.10">
    <property type="entry name" value="Knottin, scorpion toxin-like"/>
    <property type="match status" value="1"/>
</dbReference>
<dbReference type="InterPro" id="IPR044062">
    <property type="entry name" value="LCN-type_CS_alpha_beta_dom"/>
</dbReference>
<dbReference type="InterPro" id="IPR003614">
    <property type="entry name" value="Scorpion_toxin-like"/>
</dbReference>
<dbReference type="InterPro" id="IPR036574">
    <property type="entry name" value="Scorpion_toxin-like_sf"/>
</dbReference>
<dbReference type="InterPro" id="IPR018218">
    <property type="entry name" value="Scorpion_toxinL"/>
</dbReference>
<dbReference type="InterPro" id="IPR002061">
    <property type="entry name" value="Scorpion_toxinL/defensin"/>
</dbReference>
<dbReference type="Pfam" id="PF00537">
    <property type="entry name" value="Toxin_3"/>
    <property type="match status" value="1"/>
</dbReference>
<dbReference type="PRINTS" id="PR00285">
    <property type="entry name" value="SCORPNTOXIN"/>
</dbReference>
<dbReference type="SMART" id="SM00505">
    <property type="entry name" value="Knot1"/>
    <property type="match status" value="1"/>
</dbReference>
<dbReference type="SUPFAM" id="SSF57095">
    <property type="entry name" value="Scorpion toxin-like"/>
    <property type="match status" value="1"/>
</dbReference>
<dbReference type="PROSITE" id="PS51863">
    <property type="entry name" value="LCN_CSAB"/>
    <property type="match status" value="1"/>
</dbReference>
<evidence type="ECO:0000250" key="1">
    <source>
        <dbReference type="UniProtKB" id="P01480"/>
    </source>
</evidence>
<evidence type="ECO:0000255" key="2">
    <source>
        <dbReference type="PROSITE-ProRule" id="PRU01210"/>
    </source>
</evidence>
<evidence type="ECO:0000269" key="3">
    <source>
    </source>
</evidence>
<evidence type="ECO:0000305" key="4"/>
<comment type="function">
    <text evidence="3">Alpha toxins bind voltage-independently at site-3 of sodium channels (Nav) and inhibit the inactivation of the activated channels, thereby blocking neuronal transmission. Electrophysiological studies of this were performed using sodium-channels expressed in F11 cell culture, by patch-clamp recordings. Affinity of this toxin toward sodium channels in F11 cell line is in the order of 1 uM concentration.</text>
</comment>
<comment type="subcellular location">
    <subcellularLocation>
        <location evidence="3">Secreted</location>
    </subcellularLocation>
</comment>
<comment type="tissue specificity">
    <text evidence="4">Expressed by the venom gland.</text>
</comment>
<comment type="domain">
    <text evidence="4">Has the structural arrangement of an alpha-helix connected to antiparallel beta-sheets by disulfide bonds (CS-alpha/beta).</text>
</comment>
<comment type="mass spectrometry" mass="6937.0" method="Electrospray" evidence="3"/>
<comment type="toxic dose">
    <text evidence="3">LD(50) is 2.5 ug/kg when intracranially injected into mice.</text>
</comment>
<comment type="similarity">
    <text evidence="4">Belongs to the long (4 C-C) scorpion toxin superfamily. Sodium channel inhibitor family. Alpha subfamily.</text>
</comment>
<protein>
    <recommendedName>
        <fullName>Sodium channel alpha-toxin Acra4</fullName>
    </recommendedName>
</protein>
<organism>
    <name type="scientific">Androctonus crassicauda</name>
    <name type="common">Arabian fat-tailed scorpion</name>
    <dbReference type="NCBI Taxonomy" id="122909"/>
    <lineage>
        <taxon>Eukaryota</taxon>
        <taxon>Metazoa</taxon>
        <taxon>Ecdysozoa</taxon>
        <taxon>Arthropoda</taxon>
        <taxon>Chelicerata</taxon>
        <taxon>Arachnida</taxon>
        <taxon>Scorpiones</taxon>
        <taxon>Buthida</taxon>
        <taxon>Buthoidea</taxon>
        <taxon>Buthidae</taxon>
        <taxon>Androctonus</taxon>
    </lineage>
</organism>
<proteinExistence type="evidence at protein level"/>
<accession>M1JBC0</accession>